<organism>
    <name type="scientific">Drosophila melanogaster</name>
    <name type="common">Fruit fly</name>
    <dbReference type="NCBI Taxonomy" id="7227"/>
    <lineage>
        <taxon>Eukaryota</taxon>
        <taxon>Metazoa</taxon>
        <taxon>Ecdysozoa</taxon>
        <taxon>Arthropoda</taxon>
        <taxon>Hexapoda</taxon>
        <taxon>Insecta</taxon>
        <taxon>Pterygota</taxon>
        <taxon>Neoptera</taxon>
        <taxon>Endopterygota</taxon>
        <taxon>Diptera</taxon>
        <taxon>Brachycera</taxon>
        <taxon>Muscomorpha</taxon>
        <taxon>Ephydroidea</taxon>
        <taxon>Drosophilidae</taxon>
        <taxon>Drosophila</taxon>
        <taxon>Sophophora</taxon>
    </lineage>
</organism>
<reference key="1">
    <citation type="journal article" date="2000" name="Science">
        <title>The genome sequence of Drosophila melanogaster.</title>
        <authorList>
            <person name="Adams M.D."/>
            <person name="Celniker S.E."/>
            <person name="Holt R.A."/>
            <person name="Evans C.A."/>
            <person name="Gocayne J.D."/>
            <person name="Amanatides P.G."/>
            <person name="Scherer S.E."/>
            <person name="Li P.W."/>
            <person name="Hoskins R.A."/>
            <person name="Galle R.F."/>
            <person name="George R.A."/>
            <person name="Lewis S.E."/>
            <person name="Richards S."/>
            <person name="Ashburner M."/>
            <person name="Henderson S.N."/>
            <person name="Sutton G.G."/>
            <person name="Wortman J.R."/>
            <person name="Yandell M.D."/>
            <person name="Zhang Q."/>
            <person name="Chen L.X."/>
            <person name="Brandon R.C."/>
            <person name="Rogers Y.-H.C."/>
            <person name="Blazej R.G."/>
            <person name="Champe M."/>
            <person name="Pfeiffer B.D."/>
            <person name="Wan K.H."/>
            <person name="Doyle C."/>
            <person name="Baxter E.G."/>
            <person name="Helt G."/>
            <person name="Nelson C.R."/>
            <person name="Miklos G.L.G."/>
            <person name="Abril J.F."/>
            <person name="Agbayani A."/>
            <person name="An H.-J."/>
            <person name="Andrews-Pfannkoch C."/>
            <person name="Baldwin D."/>
            <person name="Ballew R.M."/>
            <person name="Basu A."/>
            <person name="Baxendale J."/>
            <person name="Bayraktaroglu L."/>
            <person name="Beasley E.M."/>
            <person name="Beeson K.Y."/>
            <person name="Benos P.V."/>
            <person name="Berman B.P."/>
            <person name="Bhandari D."/>
            <person name="Bolshakov S."/>
            <person name="Borkova D."/>
            <person name="Botchan M.R."/>
            <person name="Bouck J."/>
            <person name="Brokstein P."/>
            <person name="Brottier P."/>
            <person name="Burtis K.C."/>
            <person name="Busam D.A."/>
            <person name="Butler H."/>
            <person name="Cadieu E."/>
            <person name="Center A."/>
            <person name="Chandra I."/>
            <person name="Cherry J.M."/>
            <person name="Cawley S."/>
            <person name="Dahlke C."/>
            <person name="Davenport L.B."/>
            <person name="Davies P."/>
            <person name="de Pablos B."/>
            <person name="Delcher A."/>
            <person name="Deng Z."/>
            <person name="Mays A.D."/>
            <person name="Dew I."/>
            <person name="Dietz S.M."/>
            <person name="Dodson K."/>
            <person name="Doup L.E."/>
            <person name="Downes M."/>
            <person name="Dugan-Rocha S."/>
            <person name="Dunkov B.C."/>
            <person name="Dunn P."/>
            <person name="Durbin K.J."/>
            <person name="Evangelista C.C."/>
            <person name="Ferraz C."/>
            <person name="Ferriera S."/>
            <person name="Fleischmann W."/>
            <person name="Fosler C."/>
            <person name="Gabrielian A.E."/>
            <person name="Garg N.S."/>
            <person name="Gelbart W.M."/>
            <person name="Glasser K."/>
            <person name="Glodek A."/>
            <person name="Gong F."/>
            <person name="Gorrell J.H."/>
            <person name="Gu Z."/>
            <person name="Guan P."/>
            <person name="Harris M."/>
            <person name="Harris N.L."/>
            <person name="Harvey D.A."/>
            <person name="Heiman T.J."/>
            <person name="Hernandez J.R."/>
            <person name="Houck J."/>
            <person name="Hostin D."/>
            <person name="Houston K.A."/>
            <person name="Howland T.J."/>
            <person name="Wei M.-H."/>
            <person name="Ibegwam C."/>
            <person name="Jalali M."/>
            <person name="Kalush F."/>
            <person name="Karpen G.H."/>
            <person name="Ke Z."/>
            <person name="Kennison J.A."/>
            <person name="Ketchum K.A."/>
            <person name="Kimmel B.E."/>
            <person name="Kodira C.D."/>
            <person name="Kraft C.L."/>
            <person name="Kravitz S."/>
            <person name="Kulp D."/>
            <person name="Lai Z."/>
            <person name="Lasko P."/>
            <person name="Lei Y."/>
            <person name="Levitsky A.A."/>
            <person name="Li J.H."/>
            <person name="Li Z."/>
            <person name="Liang Y."/>
            <person name="Lin X."/>
            <person name="Liu X."/>
            <person name="Mattei B."/>
            <person name="McIntosh T.C."/>
            <person name="McLeod M.P."/>
            <person name="McPherson D."/>
            <person name="Merkulov G."/>
            <person name="Milshina N.V."/>
            <person name="Mobarry C."/>
            <person name="Morris J."/>
            <person name="Moshrefi A."/>
            <person name="Mount S.M."/>
            <person name="Moy M."/>
            <person name="Murphy B."/>
            <person name="Murphy L."/>
            <person name="Muzny D.M."/>
            <person name="Nelson D.L."/>
            <person name="Nelson D.R."/>
            <person name="Nelson K.A."/>
            <person name="Nixon K."/>
            <person name="Nusskern D.R."/>
            <person name="Pacleb J.M."/>
            <person name="Palazzolo M."/>
            <person name="Pittman G.S."/>
            <person name="Pan S."/>
            <person name="Pollard J."/>
            <person name="Puri V."/>
            <person name="Reese M.G."/>
            <person name="Reinert K."/>
            <person name="Remington K."/>
            <person name="Saunders R.D.C."/>
            <person name="Scheeler F."/>
            <person name="Shen H."/>
            <person name="Shue B.C."/>
            <person name="Siden-Kiamos I."/>
            <person name="Simpson M."/>
            <person name="Skupski M.P."/>
            <person name="Smith T.J."/>
            <person name="Spier E."/>
            <person name="Spradling A.C."/>
            <person name="Stapleton M."/>
            <person name="Strong R."/>
            <person name="Sun E."/>
            <person name="Svirskas R."/>
            <person name="Tector C."/>
            <person name="Turner R."/>
            <person name="Venter E."/>
            <person name="Wang A.H."/>
            <person name="Wang X."/>
            <person name="Wang Z.-Y."/>
            <person name="Wassarman D.A."/>
            <person name="Weinstock G.M."/>
            <person name="Weissenbach J."/>
            <person name="Williams S.M."/>
            <person name="Woodage T."/>
            <person name="Worley K.C."/>
            <person name="Wu D."/>
            <person name="Yang S."/>
            <person name="Yao Q.A."/>
            <person name="Ye J."/>
            <person name="Yeh R.-F."/>
            <person name="Zaveri J.S."/>
            <person name="Zhan M."/>
            <person name="Zhang G."/>
            <person name="Zhao Q."/>
            <person name="Zheng L."/>
            <person name="Zheng X.H."/>
            <person name="Zhong F.N."/>
            <person name="Zhong W."/>
            <person name="Zhou X."/>
            <person name="Zhu S.C."/>
            <person name="Zhu X."/>
            <person name="Smith H.O."/>
            <person name="Gibbs R.A."/>
            <person name="Myers E.W."/>
            <person name="Rubin G.M."/>
            <person name="Venter J.C."/>
        </authorList>
    </citation>
    <scope>NUCLEOTIDE SEQUENCE [LARGE SCALE GENOMIC DNA]</scope>
    <source>
        <strain>Berkeley</strain>
    </source>
</reference>
<reference key="2">
    <citation type="journal article" date="2002" name="Genome Biol.">
        <title>Annotation of the Drosophila melanogaster euchromatic genome: a systematic review.</title>
        <authorList>
            <person name="Misra S."/>
            <person name="Crosby M.A."/>
            <person name="Mungall C.J."/>
            <person name="Matthews B.B."/>
            <person name="Campbell K.S."/>
            <person name="Hradecky P."/>
            <person name="Huang Y."/>
            <person name="Kaminker J.S."/>
            <person name="Millburn G.H."/>
            <person name="Prochnik S.E."/>
            <person name="Smith C.D."/>
            <person name="Tupy J.L."/>
            <person name="Whitfield E.J."/>
            <person name="Bayraktaroglu L."/>
            <person name="Berman B.P."/>
            <person name="Bettencourt B.R."/>
            <person name="Celniker S.E."/>
            <person name="de Grey A.D.N.J."/>
            <person name="Drysdale R.A."/>
            <person name="Harris N.L."/>
            <person name="Richter J."/>
            <person name="Russo S."/>
            <person name="Schroeder A.J."/>
            <person name="Shu S.Q."/>
            <person name="Stapleton M."/>
            <person name="Yamada C."/>
            <person name="Ashburner M."/>
            <person name="Gelbart W.M."/>
            <person name="Rubin G.M."/>
            <person name="Lewis S.E."/>
        </authorList>
    </citation>
    <scope>GENOME REANNOTATION</scope>
    <source>
        <strain>Berkeley</strain>
    </source>
</reference>
<reference key="3">
    <citation type="journal article" date="2002" name="Genome Biol.">
        <title>A Drosophila full-length cDNA resource.</title>
        <authorList>
            <person name="Stapleton M."/>
            <person name="Carlson J.W."/>
            <person name="Brokstein P."/>
            <person name="Yu C."/>
            <person name="Champe M."/>
            <person name="George R.A."/>
            <person name="Guarin H."/>
            <person name="Kronmiller B."/>
            <person name="Pacleb J.M."/>
            <person name="Park S."/>
            <person name="Wan K.H."/>
            <person name="Rubin G.M."/>
            <person name="Celniker S.E."/>
        </authorList>
    </citation>
    <scope>NUCLEOTIDE SEQUENCE [LARGE SCALE MRNA]</scope>
    <source>
        <strain>Berkeley</strain>
        <tissue>Embryo</tissue>
    </source>
</reference>
<reference key="4">
    <citation type="journal article" date="2003" name="Biochem. Genet.">
        <title>Prophenol oxidase A3 in Drosophila melanogaster: activation and the PCR-based cDNA sequence.</title>
        <authorList>
            <person name="Asada N."/>
            <person name="Yokoyama G."/>
            <person name="Kawamoto N."/>
            <person name="Norioka S."/>
            <person name="Hatta T."/>
        </authorList>
    </citation>
    <scope>NUCLEOTIDE SEQUENCE [GENOMIC DNA] OF 1-664</scope>
    <scope>PROTEOLYTIC CLEAVAGE</scope>
    <source>
        <strain>Oregon-R</strain>
        <tissue>Larva</tissue>
        <tissue>Pupae</tissue>
    </source>
</reference>
<reference key="5">
    <citation type="journal article" date="2009" name="Insect Mol. Biol.">
        <title>Identification of the gene encoding pro-phenoloxidase A(3) in the fruitfly, Drosophila melanogaster.</title>
        <authorList>
            <person name="Asano T."/>
            <person name="Takebuchi K."/>
        </authorList>
    </citation>
    <scope>SUBCELLULAR LOCATION</scope>
    <scope>DEVELOPMENTAL STAGE</scope>
</reference>
<feature type="propeptide" id="PRO_0000035905" evidence="1">
    <location>
        <begin position="1"/>
        <end position="48"/>
    </location>
</feature>
<feature type="chain" id="PRO_0000035906" description="Phenoloxidase 3">
    <location>
        <begin position="51"/>
        <end position="683"/>
    </location>
</feature>
<feature type="active site" description="Proton acceptor" evidence="2">
    <location>
        <position position="351"/>
    </location>
</feature>
<feature type="binding site" evidence="3">
    <location>
        <position position="209"/>
    </location>
    <ligand>
        <name>Cu cation</name>
        <dbReference type="ChEBI" id="CHEBI:23378"/>
        <label>A</label>
    </ligand>
</feature>
<feature type="binding site" evidence="3">
    <location>
        <position position="213"/>
    </location>
    <ligand>
        <name>Cu cation</name>
        <dbReference type="ChEBI" id="CHEBI:23378"/>
        <label>A</label>
    </ligand>
</feature>
<feature type="binding site" evidence="3">
    <location>
        <position position="239"/>
    </location>
    <ligand>
        <name>Cu cation</name>
        <dbReference type="ChEBI" id="CHEBI:23378"/>
        <label>A</label>
    </ligand>
</feature>
<feature type="binding site" evidence="3">
    <location>
        <position position="366"/>
    </location>
    <ligand>
        <name>Cu cation</name>
        <dbReference type="ChEBI" id="CHEBI:23378"/>
        <label>B</label>
    </ligand>
</feature>
<feature type="binding site" evidence="3">
    <location>
        <position position="370"/>
    </location>
    <ligand>
        <name>Cu cation</name>
        <dbReference type="ChEBI" id="CHEBI:23378"/>
        <label>B</label>
    </ligand>
</feature>
<feature type="binding site" evidence="3">
    <location>
        <position position="406"/>
    </location>
    <ligand>
        <name>Cu cation</name>
        <dbReference type="ChEBI" id="CHEBI:23378"/>
        <label>B</label>
    </ligand>
</feature>
<feature type="glycosylation site" description="N-linked (GlcNAc...) asparagine" evidence="4">
    <location>
        <position position="358"/>
    </location>
</feature>
<feature type="glycosylation site" description="N-linked (GlcNAc...) asparagine" evidence="4">
    <location>
        <position position="492"/>
    </location>
</feature>
<feature type="glycosylation site" description="N-linked (GlcNAc...) asparagine" evidence="4">
    <location>
        <position position="546"/>
    </location>
</feature>
<feature type="disulfide bond" evidence="3">
    <location>
        <begin position="574"/>
        <end position="617"/>
    </location>
</feature>
<feature type="disulfide bond" evidence="3">
    <location>
        <begin position="576"/>
        <end position="624"/>
    </location>
</feature>
<feature type="sequence conflict" description="In Ref. 3; AAL29172." evidence="7" ref="3">
    <original>Y</original>
    <variation>N</variation>
    <location>
        <position position="246"/>
    </location>
</feature>
<feature type="sequence conflict" description="In Ref. 3; AAL29172." evidence="7" ref="3">
    <original>E</original>
    <variation>D</variation>
    <location>
        <position position="491"/>
    </location>
</feature>
<dbReference type="EC" id="1.14.18.1"/>
<dbReference type="EMBL" id="AE013599">
    <property type="protein sequence ID" value="AAF46946.1"/>
    <property type="molecule type" value="Genomic_DNA"/>
</dbReference>
<dbReference type="EMBL" id="AY061624">
    <property type="protein sequence ID" value="AAL29172.1"/>
    <property type="molecule type" value="mRNA"/>
</dbReference>
<dbReference type="EMBL" id="AB055857">
    <property type="protein sequence ID" value="BAB43866.1"/>
    <property type="status" value="ALT_SEQ"/>
    <property type="molecule type" value="Genomic_DNA"/>
</dbReference>
<dbReference type="RefSeq" id="NP_524760.1">
    <property type="nucleotide sequence ID" value="NM_080021.4"/>
</dbReference>
<dbReference type="SMR" id="Q9W1V6"/>
<dbReference type="BioGRID" id="69098">
    <property type="interactions" value="1"/>
</dbReference>
<dbReference type="FunCoup" id="Q9W1V6">
    <property type="interactions" value="22"/>
</dbReference>
<dbReference type="IntAct" id="Q9W1V6">
    <property type="interactions" value="2"/>
</dbReference>
<dbReference type="STRING" id="7227.FBpp0291496"/>
<dbReference type="GlyCosmos" id="Q9W1V6">
    <property type="glycosylation" value="3 sites, No reported glycans"/>
</dbReference>
<dbReference type="GlyGen" id="Q9W1V6">
    <property type="glycosylation" value="3 sites"/>
</dbReference>
<dbReference type="PaxDb" id="7227-FBpp0291496"/>
<dbReference type="DNASU" id="44513"/>
<dbReference type="EnsemblMetazoa" id="FBtr0302290">
    <property type="protein sequence ID" value="FBpp0291496"/>
    <property type="gene ID" value="FBgn0261363"/>
</dbReference>
<dbReference type="GeneID" id="44513"/>
<dbReference type="KEGG" id="dme:Dmel_CG42640"/>
<dbReference type="AGR" id="FB:FBgn0261363"/>
<dbReference type="CTD" id="44513"/>
<dbReference type="FlyBase" id="FBgn0261363">
    <property type="gene designation" value="PPO3"/>
</dbReference>
<dbReference type="VEuPathDB" id="VectorBase:FBgn0261363"/>
<dbReference type="eggNOG" id="ENOG502QQCG">
    <property type="taxonomic scope" value="Eukaryota"/>
</dbReference>
<dbReference type="HOGENOM" id="CLU_012213_0_1_1"/>
<dbReference type="InParanoid" id="Q9W1V6"/>
<dbReference type="OMA" id="CKKVQRR"/>
<dbReference type="OrthoDB" id="6371642at2759"/>
<dbReference type="PhylomeDB" id="Q9W1V6"/>
<dbReference type="BioGRID-ORCS" id="44513">
    <property type="hits" value="0 hits in 1 CRISPR screen"/>
</dbReference>
<dbReference type="GenomeRNAi" id="44513"/>
<dbReference type="PRO" id="PR:Q9W1V6"/>
<dbReference type="Proteomes" id="UP000000803">
    <property type="component" value="Chromosome 2R"/>
</dbReference>
<dbReference type="Bgee" id="FBgn0261363">
    <property type="expression patterns" value="Expressed in embryonic/larval hemocyte (Drosophila) and 6 other cell types or tissues"/>
</dbReference>
<dbReference type="ExpressionAtlas" id="Q9W1V6">
    <property type="expression patterns" value="baseline and differential"/>
</dbReference>
<dbReference type="GO" id="GO:0005737">
    <property type="term" value="C:cytoplasm"/>
    <property type="evidence" value="ECO:0007005"/>
    <property type="project" value="FlyBase"/>
</dbReference>
<dbReference type="GO" id="GO:0005576">
    <property type="term" value="C:extracellular region"/>
    <property type="evidence" value="ECO:0000314"/>
    <property type="project" value="UniProtKB"/>
</dbReference>
<dbReference type="GO" id="GO:0004097">
    <property type="term" value="F:catechol oxidase activity"/>
    <property type="evidence" value="ECO:0000314"/>
    <property type="project" value="FlyBase"/>
</dbReference>
<dbReference type="GO" id="GO:0046872">
    <property type="term" value="F:metal ion binding"/>
    <property type="evidence" value="ECO:0007669"/>
    <property type="project" value="UniProtKB-KW"/>
</dbReference>
<dbReference type="GO" id="GO:0004503">
    <property type="term" value="F:tyrosinase activity"/>
    <property type="evidence" value="ECO:0000314"/>
    <property type="project" value="FlyBase"/>
</dbReference>
<dbReference type="GO" id="GO:0042417">
    <property type="term" value="P:dopamine metabolic process"/>
    <property type="evidence" value="ECO:0000305"/>
    <property type="project" value="FlyBase"/>
</dbReference>
<dbReference type="GO" id="GO:0042438">
    <property type="term" value="P:melanin biosynthetic process"/>
    <property type="evidence" value="ECO:0007669"/>
    <property type="project" value="UniProtKB-KW"/>
</dbReference>
<dbReference type="GO" id="GO:0035011">
    <property type="term" value="P:melanotic encapsulation of foreign target"/>
    <property type="evidence" value="ECO:0000316"/>
    <property type="project" value="FlyBase"/>
</dbReference>
<dbReference type="FunFam" id="1.10.1280.10:FF:000004">
    <property type="entry name" value="Hemocyanin subunit 2"/>
    <property type="match status" value="1"/>
</dbReference>
<dbReference type="FunFam" id="2.60.40.1520:FF:000001">
    <property type="entry name" value="Hemocyanin subunit 2"/>
    <property type="match status" value="1"/>
</dbReference>
<dbReference type="FunFam" id="1.20.1370.10:FF:000001">
    <property type="entry name" value="Phenoloxidase 2"/>
    <property type="match status" value="1"/>
</dbReference>
<dbReference type="Gene3D" id="1.10.1280.10">
    <property type="entry name" value="Di-copper center containing domain from catechol oxidase"/>
    <property type="match status" value="1"/>
</dbReference>
<dbReference type="Gene3D" id="2.60.40.1520">
    <property type="entry name" value="Hemocyanin, C-terminal domain"/>
    <property type="match status" value="1"/>
</dbReference>
<dbReference type="Gene3D" id="1.20.1370.10">
    <property type="entry name" value="Hemocyanin, N-terminal domain"/>
    <property type="match status" value="1"/>
</dbReference>
<dbReference type="InterPro" id="IPR008922">
    <property type="entry name" value="Di-copper_centre_dom_sf"/>
</dbReference>
<dbReference type="InterPro" id="IPR013788">
    <property type="entry name" value="Hemocyanin/hexamerin"/>
</dbReference>
<dbReference type="InterPro" id="IPR000896">
    <property type="entry name" value="Hemocyanin/hexamerin_mid_dom"/>
</dbReference>
<dbReference type="InterPro" id="IPR005203">
    <property type="entry name" value="Hemocyanin_C"/>
</dbReference>
<dbReference type="InterPro" id="IPR037020">
    <property type="entry name" value="Hemocyanin_C_sf"/>
</dbReference>
<dbReference type="InterPro" id="IPR005204">
    <property type="entry name" value="Hemocyanin_N"/>
</dbReference>
<dbReference type="InterPro" id="IPR036697">
    <property type="entry name" value="Hemocyanin_N_sf"/>
</dbReference>
<dbReference type="InterPro" id="IPR014756">
    <property type="entry name" value="Ig_E-set"/>
</dbReference>
<dbReference type="InterPro" id="IPR002227">
    <property type="entry name" value="Tyrosinase_Cu-bd"/>
</dbReference>
<dbReference type="PANTHER" id="PTHR11511">
    <property type="entry name" value="LARVAL STORAGE PROTEIN/PHENOLOXIDASE"/>
    <property type="match status" value="1"/>
</dbReference>
<dbReference type="PANTHER" id="PTHR11511:SF4">
    <property type="entry name" value="PHENOLOXIDASE 2-RELATED"/>
    <property type="match status" value="1"/>
</dbReference>
<dbReference type="Pfam" id="PF03723">
    <property type="entry name" value="Hemocyanin_C"/>
    <property type="match status" value="1"/>
</dbReference>
<dbReference type="Pfam" id="PF00372">
    <property type="entry name" value="Hemocyanin_M"/>
    <property type="match status" value="1"/>
</dbReference>
<dbReference type="Pfam" id="PF03722">
    <property type="entry name" value="Hemocyanin_N"/>
    <property type="match status" value="1"/>
</dbReference>
<dbReference type="PRINTS" id="PR00187">
    <property type="entry name" value="HAEMOCYANIN"/>
</dbReference>
<dbReference type="SUPFAM" id="SSF48056">
    <property type="entry name" value="Di-copper centre-containing domain"/>
    <property type="match status" value="1"/>
</dbReference>
<dbReference type="SUPFAM" id="SSF81296">
    <property type="entry name" value="E set domains"/>
    <property type="match status" value="1"/>
</dbReference>
<dbReference type="SUPFAM" id="SSF48050">
    <property type="entry name" value="Hemocyanin, N-terminal domain"/>
    <property type="match status" value="1"/>
</dbReference>
<dbReference type="PROSITE" id="PS00209">
    <property type="entry name" value="HEMOCYANIN_1"/>
    <property type="match status" value="1"/>
</dbReference>
<dbReference type="PROSITE" id="PS00210">
    <property type="entry name" value="HEMOCYANIN_2"/>
    <property type="match status" value="1"/>
</dbReference>
<dbReference type="PROSITE" id="PS00498">
    <property type="entry name" value="TYROSINASE_2"/>
    <property type="match status" value="1"/>
</dbReference>
<proteinExistence type="evidence at protein level"/>
<evidence type="ECO:0000250" key="1"/>
<evidence type="ECO:0000250" key="2">
    <source>
        <dbReference type="UniProtKB" id="Q8MZM3"/>
    </source>
</evidence>
<evidence type="ECO:0000250" key="3">
    <source>
        <dbReference type="UniProtKB" id="Q9ZP19"/>
    </source>
</evidence>
<evidence type="ECO:0000255" key="4"/>
<evidence type="ECO:0000269" key="5">
    <source>
    </source>
</evidence>
<evidence type="ECO:0000269" key="6">
    <source>
    </source>
</evidence>
<evidence type="ECO:0000305" key="7"/>
<name>PPO3_DROME</name>
<accession>Q9W1V6</accession>
<accession>Q95R43</accession>
<accession>Q9BLD9</accession>
<gene>
    <name type="primary">PPO3</name>
    <name type="synonym">Dox-3</name>
    <name type="synonym">Dox-A3</name>
    <name type="synonym">proPO59</name>
    <name type="ORF">CG42640</name>
</gene>
<protein>
    <recommendedName>
        <fullName>Phenoloxidase 3</fullName>
        <ecNumber>1.14.18.1</ecNumber>
    </recommendedName>
    <alternativeName>
        <fullName>Diphenol oxidase A3</fullName>
    </alternativeName>
    <alternativeName>
        <fullName>Diphenoloxidase subunit A3</fullName>
    </alternativeName>
    <alternativeName>
        <fullName>Prophenoloxidase 59</fullName>
    </alternativeName>
    <alternativeName>
        <fullName>Tyrosinase A3</fullName>
    </alternativeName>
</protein>
<comment type="function">
    <text evidence="1">This is a copper-containing oxidase that functions in the formation of pigments such as melanins and other polyphenolic compounds. Catalyzes the rate-limiting conversions of tyrosine to DOPA, DOPA to DOPA-quinone and possibly 5,6 dihydroxyindole to indole-5'6 quinone (By similarity).</text>
</comment>
<comment type="catalytic activity">
    <reaction>
        <text>2 L-dopa + O2 = 2 L-dopaquinone + 2 H2O</text>
        <dbReference type="Rhea" id="RHEA:34287"/>
        <dbReference type="ChEBI" id="CHEBI:15377"/>
        <dbReference type="ChEBI" id="CHEBI:15379"/>
        <dbReference type="ChEBI" id="CHEBI:57504"/>
        <dbReference type="ChEBI" id="CHEBI:57924"/>
        <dbReference type="EC" id="1.14.18.1"/>
    </reaction>
</comment>
<comment type="catalytic activity">
    <reaction>
        <text>L-tyrosine + O2 = L-dopaquinone + H2O</text>
        <dbReference type="Rhea" id="RHEA:18117"/>
        <dbReference type="ChEBI" id="CHEBI:15377"/>
        <dbReference type="ChEBI" id="CHEBI:15379"/>
        <dbReference type="ChEBI" id="CHEBI:57924"/>
        <dbReference type="ChEBI" id="CHEBI:58315"/>
        <dbReference type="EC" id="1.14.18.1"/>
    </reaction>
</comment>
<comment type="cofactor">
    <cofactor evidence="3">
        <name>Cu(2+)</name>
        <dbReference type="ChEBI" id="CHEBI:29036"/>
    </cofactor>
    <text evidence="3">Binds 2 copper ions per subunit.</text>
</comment>
<comment type="subcellular location">
    <subcellularLocation>
        <location evidence="1">Secreted</location>
    </subcellularLocation>
    <text evidence="6">Expression not detected in larval hemolymph.</text>
</comment>
<comment type="developmental stage">
    <text evidence="6">Expression is very low during all stages of development.</text>
</comment>
<comment type="PTM">
    <text evidence="5">Upon activation, a trypsin type protease cleaves prophenol oxidase to yield the active enzyme.</text>
</comment>
<comment type="similarity">
    <text evidence="7">Belongs to the tyrosinase family.</text>
</comment>
<comment type="sequence caution" evidence="7">
    <conflict type="miscellaneous discrepancy">
        <sequence resource="EMBL-CDS" id="BAB43866"/>
    </conflict>
    <text>Chimeric cDNA. It is a chimera between Dox-A3 and CG8193.</text>
</comment>
<keyword id="KW-0165">Cleavage on pair of basic residues</keyword>
<keyword id="KW-0186">Copper</keyword>
<keyword id="KW-1015">Disulfide bond</keyword>
<keyword id="KW-0325">Glycoprotein</keyword>
<keyword id="KW-0470">Melanin biosynthesis</keyword>
<keyword id="KW-0479">Metal-binding</keyword>
<keyword id="KW-0503">Monooxygenase</keyword>
<keyword id="KW-0560">Oxidoreductase</keyword>
<keyword id="KW-1185">Reference proteome</keyword>
<keyword id="KW-0964">Secreted</keyword>
<keyword id="KW-0865">Zymogen</keyword>
<sequence>MADKKNLLLLFDHPTEPVFMDKGGNGTVFDVPDSYVTDRYNQMCKKVQRRVSSASEKNVQVKEIAIPDLSCSMRLGRSEQFSIFLKSHRKMASHLIEIFTKMQTVDELQSVAVYARDRVNPVLFNYALSVALLHRPDTKDLELPAFAQTFPDRFIDSKMLRSMREESFVVERSAARLPVVSSVKYTASDLDVEHRLWYFREDLGVNLHHWHWHLVYPIEAPDRSIVDKDRRGELFYYMHQQIIARYNAERLSNHMARVQPFNNLDEPIAEGYFPKMDSLVASRAYPPRFDNTRLSDVDRPNNQLRVGIDDMKRWRERIYEAIHQGYVLDTNNEKIVLDDAKGIDILGNIIEASDLTPNSTLYGDFHNMGHILIAYSHDPTNKHLEYAGVMGDASTAMRDPIFYKWHAFIDNMFQEHKRLLSPYEKQELSFPDVRVESIQVESQGQVNRLTTFWQESDVDMSRGLDFVPRGHVLARFTHLQHHEFSYTIKVENSSEATRYGYVRIFLAPKLDDRNAPMLLEQQRLMMVELDKFVVTMPPGSHTITRNSTESSVTIPFERTFRNLDKLEELQNFLCGCGWPQHMLIPKGRPEGLRFELFVMVSNYEEDKVDQTVADCGCSIAASYCGLRDRLYPDRKSMGFPFDRKPRRGSEILENFLTPNMCAVEVIITHEDRTEKLREVPARS</sequence>